<evidence type="ECO:0000255" key="1">
    <source>
        <dbReference type="HAMAP-Rule" id="MF_00839"/>
    </source>
</evidence>
<evidence type="ECO:0000269" key="2">
    <source>
    </source>
</evidence>
<evidence type="ECO:0000269" key="3">
    <source>
    </source>
</evidence>
<evidence type="ECO:0000269" key="4">
    <source>
    </source>
</evidence>
<evidence type="ECO:0000303" key="5">
    <source>
    </source>
</evidence>
<evidence type="ECO:0000305" key="6">
    <source>
    </source>
</evidence>
<dbReference type="EMBL" id="Z31376">
    <property type="protein sequence ID" value="CAA83251.1"/>
    <property type="molecule type" value="Genomic_DNA"/>
</dbReference>
<dbReference type="EMBL" id="U56901">
    <property type="protein sequence ID" value="AAC44956.1"/>
    <property type="molecule type" value="Genomic_DNA"/>
</dbReference>
<dbReference type="EMBL" id="AL009126">
    <property type="protein sequence ID" value="CAB15548.1"/>
    <property type="molecule type" value="Genomic_DNA"/>
</dbReference>
<dbReference type="EMBL" id="D10279">
    <property type="protein sequence ID" value="BAA01121.1"/>
    <property type="molecule type" value="Genomic_DNA"/>
</dbReference>
<dbReference type="PIR" id="I40400">
    <property type="entry name" value="I40400"/>
</dbReference>
<dbReference type="RefSeq" id="NP_391411.1">
    <property type="nucleotide sequence ID" value="NC_000964.3"/>
</dbReference>
<dbReference type="RefSeq" id="WP_003228031.1">
    <property type="nucleotide sequence ID" value="NZ_OZ025638.1"/>
</dbReference>
<dbReference type="PDB" id="5NJT">
    <property type="method" value="EM"/>
    <property type="resolution" value="3.80 A"/>
    <property type="chains" value="x=1-104"/>
</dbReference>
<dbReference type="PDBsum" id="5NJT"/>
<dbReference type="EMDB" id="EMD-3656"/>
<dbReference type="SMR" id="P28368"/>
<dbReference type="FunCoup" id="P28368">
    <property type="interactions" value="409"/>
</dbReference>
<dbReference type="IntAct" id="P28368">
    <property type="interactions" value="1"/>
</dbReference>
<dbReference type="MINT" id="P28368"/>
<dbReference type="STRING" id="224308.BSU35310"/>
<dbReference type="jPOST" id="P28368"/>
<dbReference type="PaxDb" id="224308-BSU35310"/>
<dbReference type="EnsemblBacteria" id="CAB15548">
    <property type="protein sequence ID" value="CAB15548"/>
    <property type="gene ID" value="BSU_35310"/>
</dbReference>
<dbReference type="GeneID" id="936715"/>
<dbReference type="KEGG" id="bsu:BSU35310"/>
<dbReference type="PATRIC" id="fig|224308.179.peg.3821"/>
<dbReference type="eggNOG" id="COG1544">
    <property type="taxonomic scope" value="Bacteria"/>
</dbReference>
<dbReference type="InParanoid" id="P28368"/>
<dbReference type="OrthoDB" id="9794975at2"/>
<dbReference type="PhylomeDB" id="P28368"/>
<dbReference type="BioCyc" id="BSUB:BSU35310-MONOMER"/>
<dbReference type="Proteomes" id="UP000001570">
    <property type="component" value="Chromosome"/>
</dbReference>
<dbReference type="GO" id="GO:0022627">
    <property type="term" value="C:cytosolic small ribosomal subunit"/>
    <property type="evidence" value="ECO:0000318"/>
    <property type="project" value="GO_Central"/>
</dbReference>
<dbReference type="GO" id="GO:0043024">
    <property type="term" value="F:ribosomal small subunit binding"/>
    <property type="evidence" value="ECO:0000318"/>
    <property type="project" value="GO_Central"/>
</dbReference>
<dbReference type="GO" id="GO:0045900">
    <property type="term" value="P:negative regulation of translational elongation"/>
    <property type="evidence" value="ECO:0000318"/>
    <property type="project" value="GO_Central"/>
</dbReference>
<dbReference type="CDD" id="cd00552">
    <property type="entry name" value="RaiA"/>
    <property type="match status" value="1"/>
</dbReference>
<dbReference type="FunFam" id="3.30.160.100:FF:000003">
    <property type="entry name" value="Ribosome hibernation promoting factor"/>
    <property type="match status" value="1"/>
</dbReference>
<dbReference type="FunFam" id="3.30.505.50:FF:000001">
    <property type="entry name" value="Ribosome hibernation promoting factor"/>
    <property type="match status" value="1"/>
</dbReference>
<dbReference type="Gene3D" id="3.30.160.100">
    <property type="entry name" value="Ribosome hibernation promotion factor-like"/>
    <property type="match status" value="1"/>
</dbReference>
<dbReference type="Gene3D" id="3.30.505.50">
    <property type="entry name" value="Sigma 54 modulation/S30EA ribosomal protein, C-terminal domain"/>
    <property type="match status" value="1"/>
</dbReference>
<dbReference type="HAMAP" id="MF_00839">
    <property type="entry name" value="HPF"/>
    <property type="match status" value="1"/>
</dbReference>
<dbReference type="InterPro" id="IPR050574">
    <property type="entry name" value="HPF/YfiA_ribosome-assoc"/>
</dbReference>
<dbReference type="InterPro" id="IPR034694">
    <property type="entry name" value="HPF_long/plastid"/>
</dbReference>
<dbReference type="InterPro" id="IPR036567">
    <property type="entry name" value="RHF-like"/>
</dbReference>
<dbReference type="InterPro" id="IPR003489">
    <property type="entry name" value="RHF/RaiA"/>
</dbReference>
<dbReference type="InterPro" id="IPR032528">
    <property type="entry name" value="Ribosom_S30AE_C"/>
</dbReference>
<dbReference type="InterPro" id="IPR038416">
    <property type="entry name" value="Ribosom_S30AE_C_sf"/>
</dbReference>
<dbReference type="NCBIfam" id="TIGR00741">
    <property type="entry name" value="yfiA"/>
    <property type="match status" value="1"/>
</dbReference>
<dbReference type="PANTHER" id="PTHR33231">
    <property type="entry name" value="30S RIBOSOMAL PROTEIN"/>
    <property type="match status" value="1"/>
</dbReference>
<dbReference type="PANTHER" id="PTHR33231:SF1">
    <property type="entry name" value="30S RIBOSOMAL PROTEIN"/>
    <property type="match status" value="1"/>
</dbReference>
<dbReference type="Pfam" id="PF16321">
    <property type="entry name" value="Ribosom_S30AE_C"/>
    <property type="match status" value="1"/>
</dbReference>
<dbReference type="Pfam" id="PF02482">
    <property type="entry name" value="Ribosomal_S30AE"/>
    <property type="match status" value="1"/>
</dbReference>
<dbReference type="SUPFAM" id="SSF69754">
    <property type="entry name" value="Ribosome binding protein Y (YfiA homologue)"/>
    <property type="match status" value="1"/>
</dbReference>
<feature type="chain" id="PRO_0000208589" description="Ribosome hibernation promotion factor">
    <location>
        <begin position="1"/>
        <end position="189"/>
    </location>
</feature>
<organism>
    <name type="scientific">Bacillus subtilis (strain 168)</name>
    <dbReference type="NCBI Taxonomy" id="224308"/>
    <lineage>
        <taxon>Bacteria</taxon>
        <taxon>Bacillati</taxon>
        <taxon>Bacillota</taxon>
        <taxon>Bacilli</taxon>
        <taxon>Bacillales</taxon>
        <taxon>Bacillaceae</taxon>
        <taxon>Bacillus</taxon>
    </lineage>
</organism>
<name>HPF_BACSU</name>
<keyword id="KW-0002">3D-structure</keyword>
<keyword id="KW-0963">Cytoplasm</keyword>
<keyword id="KW-0903">Direct protein sequencing</keyword>
<keyword id="KW-1185">Reference proteome</keyword>
<keyword id="KW-0346">Stress response</keyword>
<keyword id="KW-0810">Translation regulation</keyword>
<gene>
    <name type="primary">yvyD</name>
    <name evidence="1" type="synonym">hpf</name>
    <name type="synonym">yviI</name>
    <name type="ordered locus">BSU35310</name>
    <name type="ORF">orf189</name>
</gene>
<sequence>MNYNIRGENIEVTPALKDHVERKIGKLERYFDHSVDADVNVNLKFYNDKESKVEVTIPMTDLALRSEVHNEDMYNAIDLATNKLERQIRKHKTKVNRKFREQGSPKYLLANGLGSDTDIAVQDDIEEEESLDIVRQKRFNLKPMDSEEAILQMNMLGHNFFVFTNAETNLTNVVYRRNDGKYGLIEPTE</sequence>
<reference key="1">
    <citation type="journal article" date="1994" name="J. Bacteriol.">
        <title>The Bacillus subtilis sigma D-dependent operon encoding the flagellar proteins FliD, FliS, and FliT.</title>
        <authorList>
            <person name="Chen L."/>
            <person name="Helmann J.D."/>
        </authorList>
    </citation>
    <scope>NUCLEOTIDE SEQUENCE [GENOMIC DNA]</scope>
    <source>
        <strain>168 / HB2058</strain>
    </source>
</reference>
<reference key="2">
    <citation type="journal article" date="1996" name="Microbiology">
        <title>Sequence of the 305 degrees-307 degrees region of the Bacillus subtilis chromosome.</title>
        <authorList>
            <person name="Soldo B."/>
            <person name="Lazarevic V."/>
            <person name="Mauel C."/>
            <person name="Karamata D."/>
        </authorList>
    </citation>
    <scope>NUCLEOTIDE SEQUENCE [GENOMIC DNA]</scope>
    <source>
        <strain>168</strain>
    </source>
</reference>
<reference key="3">
    <citation type="journal article" date="1997" name="Nature">
        <title>The complete genome sequence of the Gram-positive bacterium Bacillus subtilis.</title>
        <authorList>
            <person name="Kunst F."/>
            <person name="Ogasawara N."/>
            <person name="Moszer I."/>
            <person name="Albertini A.M."/>
            <person name="Alloni G."/>
            <person name="Azevedo V."/>
            <person name="Bertero M.G."/>
            <person name="Bessieres P."/>
            <person name="Bolotin A."/>
            <person name="Borchert S."/>
            <person name="Borriss R."/>
            <person name="Boursier L."/>
            <person name="Brans A."/>
            <person name="Braun M."/>
            <person name="Brignell S.C."/>
            <person name="Bron S."/>
            <person name="Brouillet S."/>
            <person name="Bruschi C.V."/>
            <person name="Caldwell B."/>
            <person name="Capuano V."/>
            <person name="Carter N.M."/>
            <person name="Choi S.-K."/>
            <person name="Codani J.-J."/>
            <person name="Connerton I.F."/>
            <person name="Cummings N.J."/>
            <person name="Daniel R.A."/>
            <person name="Denizot F."/>
            <person name="Devine K.M."/>
            <person name="Duesterhoeft A."/>
            <person name="Ehrlich S.D."/>
            <person name="Emmerson P.T."/>
            <person name="Entian K.-D."/>
            <person name="Errington J."/>
            <person name="Fabret C."/>
            <person name="Ferrari E."/>
            <person name="Foulger D."/>
            <person name="Fritz C."/>
            <person name="Fujita M."/>
            <person name="Fujita Y."/>
            <person name="Fuma S."/>
            <person name="Galizzi A."/>
            <person name="Galleron N."/>
            <person name="Ghim S.-Y."/>
            <person name="Glaser P."/>
            <person name="Goffeau A."/>
            <person name="Golightly E.J."/>
            <person name="Grandi G."/>
            <person name="Guiseppi G."/>
            <person name="Guy B.J."/>
            <person name="Haga K."/>
            <person name="Haiech J."/>
            <person name="Harwood C.R."/>
            <person name="Henaut A."/>
            <person name="Hilbert H."/>
            <person name="Holsappel S."/>
            <person name="Hosono S."/>
            <person name="Hullo M.-F."/>
            <person name="Itaya M."/>
            <person name="Jones L.-M."/>
            <person name="Joris B."/>
            <person name="Karamata D."/>
            <person name="Kasahara Y."/>
            <person name="Klaerr-Blanchard M."/>
            <person name="Klein C."/>
            <person name="Kobayashi Y."/>
            <person name="Koetter P."/>
            <person name="Koningstein G."/>
            <person name="Krogh S."/>
            <person name="Kumano M."/>
            <person name="Kurita K."/>
            <person name="Lapidus A."/>
            <person name="Lardinois S."/>
            <person name="Lauber J."/>
            <person name="Lazarevic V."/>
            <person name="Lee S.-M."/>
            <person name="Levine A."/>
            <person name="Liu H."/>
            <person name="Masuda S."/>
            <person name="Mauel C."/>
            <person name="Medigue C."/>
            <person name="Medina N."/>
            <person name="Mellado R.P."/>
            <person name="Mizuno M."/>
            <person name="Moestl D."/>
            <person name="Nakai S."/>
            <person name="Noback M."/>
            <person name="Noone D."/>
            <person name="O'Reilly M."/>
            <person name="Ogawa K."/>
            <person name="Ogiwara A."/>
            <person name="Oudega B."/>
            <person name="Park S.-H."/>
            <person name="Parro V."/>
            <person name="Pohl T.M."/>
            <person name="Portetelle D."/>
            <person name="Porwollik S."/>
            <person name="Prescott A.M."/>
            <person name="Presecan E."/>
            <person name="Pujic P."/>
            <person name="Purnelle B."/>
            <person name="Rapoport G."/>
            <person name="Rey M."/>
            <person name="Reynolds S."/>
            <person name="Rieger M."/>
            <person name="Rivolta C."/>
            <person name="Rocha E."/>
            <person name="Roche B."/>
            <person name="Rose M."/>
            <person name="Sadaie Y."/>
            <person name="Sato T."/>
            <person name="Scanlan E."/>
            <person name="Schleich S."/>
            <person name="Schroeter R."/>
            <person name="Scoffone F."/>
            <person name="Sekiguchi J."/>
            <person name="Sekowska A."/>
            <person name="Seror S.J."/>
            <person name="Serror P."/>
            <person name="Shin B.-S."/>
            <person name="Soldo B."/>
            <person name="Sorokin A."/>
            <person name="Tacconi E."/>
            <person name="Takagi T."/>
            <person name="Takahashi H."/>
            <person name="Takemaru K."/>
            <person name="Takeuchi M."/>
            <person name="Tamakoshi A."/>
            <person name="Tanaka T."/>
            <person name="Terpstra P."/>
            <person name="Tognoni A."/>
            <person name="Tosato V."/>
            <person name="Uchiyama S."/>
            <person name="Vandenbol M."/>
            <person name="Vannier F."/>
            <person name="Vassarotti A."/>
            <person name="Viari A."/>
            <person name="Wambutt R."/>
            <person name="Wedler E."/>
            <person name="Wedler H."/>
            <person name="Weitzenegger T."/>
            <person name="Winters P."/>
            <person name="Wipat A."/>
            <person name="Yamamoto H."/>
            <person name="Yamane K."/>
            <person name="Yasumoto K."/>
            <person name="Yata K."/>
            <person name="Yoshida K."/>
            <person name="Yoshikawa H.-F."/>
            <person name="Zumstein E."/>
            <person name="Yoshikawa H."/>
            <person name="Danchin A."/>
        </authorList>
    </citation>
    <scope>NUCLEOTIDE SEQUENCE [LARGE SCALE GENOMIC DNA]</scope>
    <source>
        <strain>168</strain>
    </source>
</reference>
<reference key="4">
    <citation type="journal article" date="1991" name="Gene">
        <title>Sequencing reveals similarity of the wild-type div+ gene of Bacillus subtilis to the Escherichia coli secA gene.</title>
        <authorList>
            <person name="Sadaie Y."/>
            <person name="Takamatsu H."/>
            <person name="Nakamura K."/>
            <person name="Yamane K."/>
        </authorList>
    </citation>
    <scope>NUCLEOTIDE SEQUENCE [GENOMIC DNA] OF 73-189</scope>
    <source>
        <strain>168 / Marburg / ATCC 6051 / DSM 10 / JCM 1465 / NBRC 13719 / NCIMB 3610 / NRRL NRS-744 / VKM B-501</strain>
    </source>
</reference>
<reference key="5">
    <citation type="journal article" date="1997" name="Microbiology">
        <title>Specific and general stress proteins in Bacillus subtilis--a two-dimensional protein electrophoresis study.</title>
        <authorList>
            <person name="Bernhardt J."/>
            <person name="Volker U."/>
            <person name="Volker A."/>
            <person name="Antelmann H."/>
            <person name="Schmid R."/>
            <person name="Mach H."/>
            <person name="Hecker M."/>
        </authorList>
    </citation>
    <scope>PROTEIN SEQUENCE OF N-TERMINUS</scope>
    <scope>INDUCTION BY SIGB</scope>
    <source>
        <strain>168</strain>
    </source>
</reference>
<reference key="6">
    <citation type="journal article" date="1998" name="J. Bacteriol.">
        <title>The yvyD gene of Bacillus subtilis is under dual control of sigmaB and sigmaH.</title>
        <authorList>
            <person name="Drzewiecki K."/>
            <person name="Eymann C."/>
            <person name="Mittenhuber G."/>
            <person name="Hecker M."/>
        </authorList>
    </citation>
    <scope>FUNCTION</scope>
    <scope>INDUCTION BY SIGB AND SIGH</scope>
    <scope>DISRUPTION PHENOTYPE</scope>
    <source>
        <strain>168 / IS58</strain>
    </source>
</reference>
<reference key="7">
    <citation type="journal article" date="2012" name="MicrobiologyOpen">
        <title>Expression of a small (p)ppGpp synthetase, YwaC, in the (p)ppGpp(0) mutant of Bacillus subtilis triggers YvyD-dependent dimerization of ribosome.</title>
        <authorList>
            <person name="Tagami K."/>
            <person name="Nanamiya H."/>
            <person name="Kazo Y."/>
            <person name="Maehashi M."/>
            <person name="Suzuki S."/>
            <person name="Namba E."/>
            <person name="Hoshiya M."/>
            <person name="Hanai R."/>
            <person name="Tozawa Y."/>
            <person name="Morimoto T."/>
            <person name="Ogasawara N."/>
            <person name="Kageyama Y."/>
            <person name="Ara K."/>
            <person name="Ozaki K."/>
            <person name="Yoshida M."/>
            <person name="Kuroiwa H."/>
            <person name="Kuroiwa T."/>
            <person name="Ohashi Y."/>
            <person name="Kawamura F."/>
        </authorList>
    </citation>
    <scope>FUNCTION</scope>
    <scope>SUBUNIT</scope>
    <scope>SUBCELLULAR LOCATION</scope>
    <scope>INDUCTION BY SIGH</scope>
    <scope>DISRUPTION PHENOTYPE</scope>
    <source>
        <strain>168</strain>
    </source>
</reference>
<proteinExistence type="evidence at protein level"/>
<protein>
    <recommendedName>
        <fullName evidence="1">Ribosome hibernation promotion factor</fullName>
        <shortName evidence="1">HPF</shortName>
    </recommendedName>
    <alternativeName>
        <fullName evidence="5">Hst23</fullName>
    </alternativeName>
    <alternativeName>
        <fullName>Putative sigma-54 modulation protein</fullName>
    </alternativeName>
    <alternativeName>
        <fullName>SigL modulation protein</fullName>
    </alternativeName>
</protein>
<accession>P28368</accession>
<comment type="function">
    <text evidence="1 2 4">Required for dimerization of active 70S ribosomes into 100S ribosomes in stationary phase; 100S ribosomes are translationally inactive and sometimes present during exponential growth. May not be the only factor implicated (PubMed:22950019). Might negatively regulate the activity of the sigma-54 factor (SigL) (PubMed:9852014).</text>
</comment>
<comment type="subunit">
    <text evidence="1 2">Interacts with 100S ribosomes. Not associated with 70S ribosome monomers, about 1 monomer per ribosome (PubMed:22950019).</text>
</comment>
<comment type="subcellular location">
    <subcellularLocation>
        <location evidence="1 6">Cytoplasm</location>
    </subcellularLocation>
</comment>
<comment type="induction">
    <text evidence="2 3 4">Expressed under the dual control of sigma-B (PubMed:9296790) and sigma-H factors (PubMed:9296790, PubMed:9852014). The sigma-B-dependent promoter drives expression of yvyD under stress conditions and after glucose starvation, whereas a sigma-H-dependent promoter is responsible for yvyD transcription following amino acid depletion (PubMed:9852014). Also claimed to be under sole control of sigma-H (PubMed:22950019).</text>
</comment>
<comment type="disruption phenotype">
    <text evidence="2 4">The expression of a sigL-dependent gene (levD) is up-regulated two-fold in cells lacking yvyD, but the relative amount of the sigL transcript is not increased (PubMed:9852014). In cells overexpressing ppGpp synthase YwaC, deletion of this gene causes loss of 100S ribosome formation by dimerizing 70S ribosomes (PubMed:22950019).</text>
</comment>
<comment type="similarity">
    <text evidence="1 6">Belongs to the HPF/YfiA ribosome-associated protein family. Long HPF subfamily.</text>
</comment>